<dbReference type="EMBL" id="X07567">
    <property type="protein sequence ID" value="CAA30451.1"/>
    <property type="molecule type" value="Genomic_DNA"/>
</dbReference>
<dbReference type="PIR" id="S03830">
    <property type="entry name" value="S03830"/>
</dbReference>
<dbReference type="RefSeq" id="WP_013068962.1">
    <property type="nucleotide sequence ID" value="NZ_VIBE01000005.1"/>
</dbReference>
<dbReference type="SMR" id="P17435"/>
<dbReference type="GeneID" id="31492046"/>
<dbReference type="OMA" id="ACVHDRY"/>
<dbReference type="Gene3D" id="1.25.10.10">
    <property type="entry name" value="Leucine-rich Repeat Variant"/>
    <property type="match status" value="1"/>
</dbReference>
<dbReference type="InterPro" id="IPR011989">
    <property type="entry name" value="ARM-like"/>
</dbReference>
<dbReference type="InterPro" id="IPR016024">
    <property type="entry name" value="ARM-type_fold"/>
</dbReference>
<dbReference type="InterPro" id="IPR004830">
    <property type="entry name" value="LRR_variant"/>
</dbReference>
<dbReference type="InterPro" id="IPR008665">
    <property type="entry name" value="LRV_FeS"/>
</dbReference>
<dbReference type="Pfam" id="PF01816">
    <property type="entry name" value="LRV"/>
    <property type="match status" value="2"/>
</dbReference>
<dbReference type="Pfam" id="PF05484">
    <property type="entry name" value="LRV_FeS"/>
    <property type="match status" value="1"/>
</dbReference>
<dbReference type="SUPFAM" id="SSF48371">
    <property type="entry name" value="ARM repeat"/>
    <property type="match status" value="1"/>
</dbReference>
<protein>
    <recommendedName>
        <fullName>Uncharacterized 27.7 kDa protein in nifB 3'region</fullName>
    </recommendedName>
    <alternativeName>
        <fullName>ORF1</fullName>
    </alternativeName>
</protein>
<organism>
    <name type="scientific">Rhodobacter capsulatus</name>
    <name type="common">Rhodopseudomonas capsulata</name>
    <dbReference type="NCBI Taxonomy" id="1061"/>
    <lineage>
        <taxon>Bacteria</taxon>
        <taxon>Pseudomonadati</taxon>
        <taxon>Pseudomonadota</taxon>
        <taxon>Alphaproteobacteria</taxon>
        <taxon>Rhodobacterales</taxon>
        <taxon>Rhodobacter group</taxon>
        <taxon>Rhodobacter</taxon>
    </lineage>
</organism>
<reference key="1">
    <citation type="journal article" date="1988" name="Mol. Gen. Genet.">
        <title>Genetic characterization and sequence analysis of the duplicated nifA/nifB gene region of Rhodobacter capsulatus.</title>
        <authorList>
            <person name="Masepohl P."/>
            <person name="Klipp W."/>
            <person name="Puehler A."/>
        </authorList>
    </citation>
    <scope>NUCLEOTIDE SEQUENCE [GENOMIC DNA]</scope>
</reference>
<accession>P17435</accession>
<feature type="chain" id="PRO_0000066322" description="Uncharacterized 27.7 kDa protein in nifB 3'region">
    <location>
        <begin position="1"/>
        <end position="245"/>
    </location>
</feature>
<name>YNF1_RHOCA</name>
<proteinExistence type="predicted"/>
<sequence length="245" mass="27717">MPEGPEPLDWTGQALECGACRFQDLLESGHCGLGWSCLNDRYAKRIERFFLLNPELADENLGHPYFETRVQAARTASVFRLPRLLADEDPAVRGMAVLRLPAAHAERLIRDPDRAVRIAVAHRLPPGGLLPMLQDKDGHVRLIVARRAETGMLPMLCADPDPEVRAEVARRIDPAFLDRFRTDPEPLVRRVAARRRPGLFVADDDLRVRHTVAEEGGREELRRLVSDPEDIIRETAIQRLAHLKE</sequence>